<organism>
    <name type="scientific">Acanthamoeba polyphaga mimivirus</name>
    <name type="common">APMV</name>
    <dbReference type="NCBI Taxonomy" id="212035"/>
    <lineage>
        <taxon>Viruses</taxon>
        <taxon>Varidnaviria</taxon>
        <taxon>Bamfordvirae</taxon>
        <taxon>Nucleocytoviricota</taxon>
        <taxon>Megaviricetes</taxon>
        <taxon>Imitervirales</taxon>
        <taxon>Mimiviridae</taxon>
        <taxon>Megamimivirinae</taxon>
        <taxon>Mimivirus</taxon>
        <taxon>Mimivirus bradfordmassiliense</taxon>
    </lineage>
</organism>
<evidence type="ECO:0000255" key="1"/>
<evidence type="ECO:0000305" key="2"/>
<feature type="chain" id="PRO_0000253454" description="Uncharacterized protein R468">
    <location>
        <begin position="1"/>
        <end position="240"/>
    </location>
</feature>
<feature type="transmembrane region" description="Helical" evidence="1">
    <location>
        <begin position="12"/>
        <end position="32"/>
    </location>
</feature>
<feature type="transmembrane region" description="Helical" evidence="1">
    <location>
        <begin position="66"/>
        <end position="86"/>
    </location>
</feature>
<feature type="transmembrane region" description="Helical" evidence="1">
    <location>
        <begin position="89"/>
        <end position="109"/>
    </location>
</feature>
<feature type="glycosylation site" description="N-linked (GlcNAc...) asparagine; by host" evidence="1">
    <location>
        <position position="129"/>
    </location>
</feature>
<feature type="glycosylation site" description="N-linked (GlcNAc...) asparagine; by host" evidence="1">
    <location>
        <position position="157"/>
    </location>
</feature>
<comment type="subcellular location">
    <subcellularLocation>
        <location evidence="2">Membrane</location>
        <topology evidence="2">Multi-pass membrane protein</topology>
    </subcellularLocation>
</comment>
<protein>
    <recommendedName>
        <fullName>Uncharacterized protein R468</fullName>
    </recommendedName>
</protein>
<gene>
    <name type="ordered locus">MIMI_R468</name>
</gene>
<reference key="1">
    <citation type="journal article" date="2004" name="Science">
        <title>The 1.2-megabase genome sequence of Mimivirus.</title>
        <authorList>
            <person name="Raoult D."/>
            <person name="Audic S."/>
            <person name="Robert C."/>
            <person name="Abergel C."/>
            <person name="Renesto P."/>
            <person name="Ogata H."/>
            <person name="La Scola B."/>
            <person name="Susan M."/>
            <person name="Claverie J.-M."/>
        </authorList>
    </citation>
    <scope>NUCLEOTIDE SEQUENCE [LARGE SCALE GENOMIC DNA]</scope>
    <source>
        <strain>Rowbotham-Bradford</strain>
    </source>
</reference>
<proteinExistence type="predicted"/>
<keyword id="KW-0325">Glycoprotein</keyword>
<keyword id="KW-0472">Membrane</keyword>
<keyword id="KW-1185">Reference proteome</keyword>
<keyword id="KW-0812">Transmembrane</keyword>
<keyword id="KW-1133">Transmembrane helix</keyword>
<dbReference type="EMBL" id="AY653733">
    <property type="protein sequence ID" value="AAV50734.1"/>
    <property type="molecule type" value="Genomic_DNA"/>
</dbReference>
<dbReference type="SMR" id="Q5UQD3"/>
<dbReference type="Proteomes" id="UP000001134">
    <property type="component" value="Genome"/>
</dbReference>
<dbReference type="GO" id="GO:0016020">
    <property type="term" value="C:membrane"/>
    <property type="evidence" value="ECO:0007669"/>
    <property type="project" value="UniProtKB-SubCell"/>
</dbReference>
<dbReference type="InterPro" id="IPR043915">
    <property type="entry name" value="P9_TM"/>
</dbReference>
<dbReference type="Pfam" id="PF19066">
    <property type="entry name" value="P9_TM"/>
    <property type="match status" value="1"/>
</dbReference>
<name>YR468_MIMIV</name>
<sequence length="240" mass="27950">MEDLVCVSNHNICIHISVNILFIDIYITILMSKQESDNVFWIYDPMILFRDGNYLKIFPTKDMTQIQVLNALTRLCIYLAIIFVLVSAISGYAYVPIIFILIIIVIYFFNNNKNSVQTEMFDDNYPNTNNSDNIDNTDNIMNKQNYKKISDYNPYMNLTLNDIGSGNDDLEANLVELPKDSNRKFYTTSSTTNPNKQEDFMKWIYDLPETCKENQACCLRHEDVRFKRHNPDIDSPTPNS</sequence>
<organismHost>
    <name type="scientific">Acanthamoeba polyphaga</name>
    <name type="common">Amoeba</name>
    <dbReference type="NCBI Taxonomy" id="5757"/>
</organismHost>
<accession>Q5UQD3</accession>